<gene>
    <name evidence="2" type="primary">tuf</name>
    <name type="ordered locus">Synpcc7942_0884</name>
</gene>
<reference key="1">
    <citation type="journal article" date="1990" name="Arch. Microbiol.">
        <title>Complete nucleotide sequences of seven eubacterial genes coding for the elongation factor Tu: functional, structural and phylogenetic evaluations.</title>
        <authorList>
            <person name="Ludwig W."/>
            <person name="Weizenegger M."/>
            <person name="Betzl D."/>
            <person name="Leidel E."/>
            <person name="Lenz T."/>
            <person name="Ludvigsen A."/>
            <person name="Moellenhoff D."/>
            <person name="Wenzig P."/>
            <person name="Schleifer K.H."/>
        </authorList>
    </citation>
    <scope>NUCLEOTIDE SEQUENCE [GENOMIC DNA]</scope>
</reference>
<reference key="2">
    <citation type="submission" date="2005-08" db="EMBL/GenBank/DDBJ databases">
        <title>Complete sequence of chromosome 1 of Synechococcus elongatus PCC 7942.</title>
        <authorList>
            <consortium name="US DOE Joint Genome Institute"/>
            <person name="Copeland A."/>
            <person name="Lucas S."/>
            <person name="Lapidus A."/>
            <person name="Barry K."/>
            <person name="Detter J.C."/>
            <person name="Glavina T."/>
            <person name="Hammon N."/>
            <person name="Israni S."/>
            <person name="Pitluck S."/>
            <person name="Schmutz J."/>
            <person name="Larimer F."/>
            <person name="Land M."/>
            <person name="Kyrpides N."/>
            <person name="Lykidis A."/>
            <person name="Golden S."/>
            <person name="Richardson P."/>
        </authorList>
    </citation>
    <scope>NUCLEOTIDE SEQUENCE [LARGE SCALE GENOMIC DNA]</scope>
    <source>
        <strain>ATCC 33912 / PCC 7942 / FACHB-805</strain>
    </source>
</reference>
<keyword id="KW-0963">Cytoplasm</keyword>
<keyword id="KW-0251">Elongation factor</keyword>
<keyword id="KW-0342">GTP-binding</keyword>
<keyword id="KW-0378">Hydrolase</keyword>
<keyword id="KW-0460">Magnesium</keyword>
<keyword id="KW-0479">Metal-binding</keyword>
<keyword id="KW-0547">Nucleotide-binding</keyword>
<keyword id="KW-0648">Protein biosynthesis</keyword>
<keyword id="KW-1185">Reference proteome</keyword>
<organism>
    <name type="scientific">Synechococcus elongatus (strain ATCC 33912 / PCC 7942 / FACHB-805)</name>
    <name type="common">Anacystis nidulans R2</name>
    <dbReference type="NCBI Taxonomy" id="1140"/>
    <lineage>
        <taxon>Bacteria</taxon>
        <taxon>Bacillati</taxon>
        <taxon>Cyanobacteriota</taxon>
        <taxon>Cyanophyceae</taxon>
        <taxon>Synechococcales</taxon>
        <taxon>Synechococcaceae</taxon>
        <taxon>Synechococcus</taxon>
    </lineage>
</organism>
<comment type="function">
    <text evidence="2">GTP hydrolase that promotes the GTP-dependent binding of aminoacyl-tRNA to the A-site of ribosomes during protein biosynthesis.</text>
</comment>
<comment type="catalytic activity">
    <reaction evidence="2">
        <text>GTP + H2O = GDP + phosphate + H(+)</text>
        <dbReference type="Rhea" id="RHEA:19669"/>
        <dbReference type="ChEBI" id="CHEBI:15377"/>
        <dbReference type="ChEBI" id="CHEBI:15378"/>
        <dbReference type="ChEBI" id="CHEBI:37565"/>
        <dbReference type="ChEBI" id="CHEBI:43474"/>
        <dbReference type="ChEBI" id="CHEBI:58189"/>
        <dbReference type="EC" id="3.6.5.3"/>
    </reaction>
    <physiologicalReaction direction="left-to-right" evidence="2">
        <dbReference type="Rhea" id="RHEA:19670"/>
    </physiologicalReaction>
</comment>
<comment type="subunit">
    <text>Monomer.</text>
</comment>
<comment type="subcellular location">
    <subcellularLocation>
        <location evidence="2">Cytoplasm</location>
    </subcellularLocation>
</comment>
<comment type="similarity">
    <text evidence="2">Belongs to the TRAFAC class translation factor GTPase superfamily. Classic translation factor GTPase family. EF-Tu/EF-1A subfamily.</text>
</comment>
<evidence type="ECO:0000250" key="1"/>
<evidence type="ECO:0000255" key="2">
    <source>
        <dbReference type="HAMAP-Rule" id="MF_00118"/>
    </source>
</evidence>
<evidence type="ECO:0000305" key="3"/>
<accession>P33171</accession>
<accession>Q31PV5</accession>
<proteinExistence type="inferred from homology"/>
<sequence>MARAKFERTKPHANIGTIGHVDHGKTTLTAAITTVLAKAGMAKARAYADIDAAPEEKARGITINTAHVEYETGNRHYAHVDCPGHADYVKNMITGAAQMDGAILVVSAADGPMPQTREHILLAKQVGVPNIVVFLNKEDMVDDAELLELVELEVRELLSSYDFPGDDIPIVAGSALQALEAIQGGASGQKGDNPWVDKILKLMEEVDAYIPTPEREVDRPFLMAVEDVFTITGRGTVATGRIERGSVKVGETIEIVGLRDTRSTTVTGVEMFQKTLDEGLAGDNVGLLLRGIQKTDIERGMVLAKPGSITPHTKFESEVYVLKKEEGGRHTPFFPGYRPQFYVRTTDVTGAISDFTADDGSAAEMVIPGDRIKMTVELINPIAIEQGMRFAIREGGRTIGAGVVSKILQ</sequence>
<feature type="chain" id="PRO_0000091417" description="Elongation factor Tu">
    <location>
        <begin position="1"/>
        <end position="409"/>
    </location>
</feature>
<feature type="domain" description="tr-type G">
    <location>
        <begin position="10"/>
        <end position="214"/>
    </location>
</feature>
<feature type="region of interest" description="G1" evidence="1">
    <location>
        <begin position="19"/>
        <end position="26"/>
    </location>
</feature>
<feature type="region of interest" description="G2" evidence="1">
    <location>
        <begin position="60"/>
        <end position="64"/>
    </location>
</feature>
<feature type="region of interest" description="G3" evidence="1">
    <location>
        <begin position="81"/>
        <end position="84"/>
    </location>
</feature>
<feature type="region of interest" description="G4" evidence="1">
    <location>
        <begin position="136"/>
        <end position="139"/>
    </location>
</feature>
<feature type="region of interest" description="G5" evidence="1">
    <location>
        <begin position="174"/>
        <end position="176"/>
    </location>
</feature>
<feature type="binding site" evidence="2">
    <location>
        <begin position="19"/>
        <end position="26"/>
    </location>
    <ligand>
        <name>GTP</name>
        <dbReference type="ChEBI" id="CHEBI:37565"/>
    </ligand>
</feature>
<feature type="binding site" evidence="2">
    <location>
        <position position="26"/>
    </location>
    <ligand>
        <name>Mg(2+)</name>
        <dbReference type="ChEBI" id="CHEBI:18420"/>
    </ligand>
</feature>
<feature type="binding site" evidence="2">
    <location>
        <begin position="81"/>
        <end position="85"/>
    </location>
    <ligand>
        <name>GTP</name>
        <dbReference type="ChEBI" id="CHEBI:37565"/>
    </ligand>
</feature>
<feature type="binding site" evidence="2">
    <location>
        <begin position="136"/>
        <end position="139"/>
    </location>
    <ligand>
        <name>GTP</name>
        <dbReference type="ChEBI" id="CHEBI:37565"/>
    </ligand>
</feature>
<feature type="sequence conflict" description="In Ref. 1." evidence="3" ref="1">
    <original>E</original>
    <variation>D</variation>
    <location>
        <position position="325"/>
    </location>
</feature>
<name>EFTU_SYNE7</name>
<protein>
    <recommendedName>
        <fullName evidence="2">Elongation factor Tu</fullName>
        <shortName evidence="2">EF-Tu</shortName>
        <ecNumber evidence="2">3.6.5.3</ecNumber>
    </recommendedName>
</protein>
<dbReference type="EC" id="3.6.5.3" evidence="2"/>
<dbReference type="EMBL" id="CP000100">
    <property type="protein sequence ID" value="ABB56914.1"/>
    <property type="molecule type" value="Genomic_DNA"/>
</dbReference>
<dbReference type="PIR" id="S04430">
    <property type="entry name" value="S04430"/>
</dbReference>
<dbReference type="RefSeq" id="WP_011242968.1">
    <property type="nucleotide sequence ID" value="NZ_JACJTX010000005.1"/>
</dbReference>
<dbReference type="SMR" id="P33171"/>
<dbReference type="STRING" id="1140.Synpcc7942_0884"/>
<dbReference type="PaxDb" id="1140-Synpcc7942_0884"/>
<dbReference type="GeneID" id="72429733"/>
<dbReference type="KEGG" id="syf:Synpcc7942_0884"/>
<dbReference type="eggNOG" id="COG0050">
    <property type="taxonomic scope" value="Bacteria"/>
</dbReference>
<dbReference type="HOGENOM" id="CLU_007265_0_1_3"/>
<dbReference type="OrthoDB" id="9804504at2"/>
<dbReference type="BioCyc" id="SYNEL:SYNPCC7942_0884-MONOMER"/>
<dbReference type="Proteomes" id="UP000889800">
    <property type="component" value="Chromosome"/>
</dbReference>
<dbReference type="GO" id="GO:0005829">
    <property type="term" value="C:cytosol"/>
    <property type="evidence" value="ECO:0007669"/>
    <property type="project" value="TreeGrafter"/>
</dbReference>
<dbReference type="GO" id="GO:0005525">
    <property type="term" value="F:GTP binding"/>
    <property type="evidence" value="ECO:0007669"/>
    <property type="project" value="UniProtKB-UniRule"/>
</dbReference>
<dbReference type="GO" id="GO:0003924">
    <property type="term" value="F:GTPase activity"/>
    <property type="evidence" value="ECO:0007669"/>
    <property type="project" value="InterPro"/>
</dbReference>
<dbReference type="GO" id="GO:0003746">
    <property type="term" value="F:translation elongation factor activity"/>
    <property type="evidence" value="ECO:0007669"/>
    <property type="project" value="UniProtKB-UniRule"/>
</dbReference>
<dbReference type="CDD" id="cd01884">
    <property type="entry name" value="EF_Tu"/>
    <property type="match status" value="1"/>
</dbReference>
<dbReference type="CDD" id="cd03697">
    <property type="entry name" value="EFTU_II"/>
    <property type="match status" value="1"/>
</dbReference>
<dbReference type="CDD" id="cd03707">
    <property type="entry name" value="EFTU_III"/>
    <property type="match status" value="1"/>
</dbReference>
<dbReference type="FunFam" id="2.40.30.10:FF:000001">
    <property type="entry name" value="Elongation factor Tu"/>
    <property type="match status" value="1"/>
</dbReference>
<dbReference type="FunFam" id="2.40.30.10:FF:000046">
    <property type="entry name" value="Elongation factor Tu"/>
    <property type="match status" value="1"/>
</dbReference>
<dbReference type="FunFam" id="3.40.50.300:FF:000003">
    <property type="entry name" value="Elongation factor Tu"/>
    <property type="match status" value="1"/>
</dbReference>
<dbReference type="Gene3D" id="3.40.50.300">
    <property type="entry name" value="P-loop containing nucleotide triphosphate hydrolases"/>
    <property type="match status" value="1"/>
</dbReference>
<dbReference type="Gene3D" id="2.40.30.10">
    <property type="entry name" value="Translation factors"/>
    <property type="match status" value="2"/>
</dbReference>
<dbReference type="HAMAP" id="MF_00118_B">
    <property type="entry name" value="EF_Tu_B"/>
    <property type="match status" value="1"/>
</dbReference>
<dbReference type="InterPro" id="IPR041709">
    <property type="entry name" value="EF-Tu_GTP-bd"/>
</dbReference>
<dbReference type="InterPro" id="IPR050055">
    <property type="entry name" value="EF-Tu_GTPase"/>
</dbReference>
<dbReference type="InterPro" id="IPR004161">
    <property type="entry name" value="EFTu-like_2"/>
</dbReference>
<dbReference type="InterPro" id="IPR033720">
    <property type="entry name" value="EFTU_2"/>
</dbReference>
<dbReference type="InterPro" id="IPR031157">
    <property type="entry name" value="G_TR_CS"/>
</dbReference>
<dbReference type="InterPro" id="IPR027417">
    <property type="entry name" value="P-loop_NTPase"/>
</dbReference>
<dbReference type="InterPro" id="IPR005225">
    <property type="entry name" value="Small_GTP-bd"/>
</dbReference>
<dbReference type="InterPro" id="IPR000795">
    <property type="entry name" value="T_Tr_GTP-bd_dom"/>
</dbReference>
<dbReference type="InterPro" id="IPR009000">
    <property type="entry name" value="Transl_B-barrel_sf"/>
</dbReference>
<dbReference type="InterPro" id="IPR009001">
    <property type="entry name" value="Transl_elong_EF1A/Init_IF2_C"/>
</dbReference>
<dbReference type="InterPro" id="IPR004541">
    <property type="entry name" value="Transl_elong_EFTu/EF1A_bac/org"/>
</dbReference>
<dbReference type="InterPro" id="IPR004160">
    <property type="entry name" value="Transl_elong_EFTu/EF1A_C"/>
</dbReference>
<dbReference type="NCBIfam" id="TIGR00485">
    <property type="entry name" value="EF-Tu"/>
    <property type="match status" value="1"/>
</dbReference>
<dbReference type="NCBIfam" id="NF000766">
    <property type="entry name" value="PRK00049.1"/>
    <property type="match status" value="1"/>
</dbReference>
<dbReference type="NCBIfam" id="NF009372">
    <property type="entry name" value="PRK12735.1"/>
    <property type="match status" value="1"/>
</dbReference>
<dbReference type="NCBIfam" id="NF009373">
    <property type="entry name" value="PRK12736.1"/>
    <property type="match status" value="1"/>
</dbReference>
<dbReference type="NCBIfam" id="TIGR00231">
    <property type="entry name" value="small_GTP"/>
    <property type="match status" value="1"/>
</dbReference>
<dbReference type="PANTHER" id="PTHR43721:SF22">
    <property type="entry name" value="ELONGATION FACTOR TU, MITOCHONDRIAL"/>
    <property type="match status" value="1"/>
</dbReference>
<dbReference type="PANTHER" id="PTHR43721">
    <property type="entry name" value="ELONGATION FACTOR TU-RELATED"/>
    <property type="match status" value="1"/>
</dbReference>
<dbReference type="Pfam" id="PF00009">
    <property type="entry name" value="GTP_EFTU"/>
    <property type="match status" value="1"/>
</dbReference>
<dbReference type="Pfam" id="PF03144">
    <property type="entry name" value="GTP_EFTU_D2"/>
    <property type="match status" value="1"/>
</dbReference>
<dbReference type="Pfam" id="PF03143">
    <property type="entry name" value="GTP_EFTU_D3"/>
    <property type="match status" value="1"/>
</dbReference>
<dbReference type="PRINTS" id="PR00315">
    <property type="entry name" value="ELONGATNFCT"/>
</dbReference>
<dbReference type="SUPFAM" id="SSF50465">
    <property type="entry name" value="EF-Tu/eEF-1alpha/eIF2-gamma C-terminal domain"/>
    <property type="match status" value="1"/>
</dbReference>
<dbReference type="SUPFAM" id="SSF52540">
    <property type="entry name" value="P-loop containing nucleoside triphosphate hydrolases"/>
    <property type="match status" value="1"/>
</dbReference>
<dbReference type="SUPFAM" id="SSF50447">
    <property type="entry name" value="Translation proteins"/>
    <property type="match status" value="1"/>
</dbReference>
<dbReference type="PROSITE" id="PS00301">
    <property type="entry name" value="G_TR_1"/>
    <property type="match status" value="1"/>
</dbReference>
<dbReference type="PROSITE" id="PS51722">
    <property type="entry name" value="G_TR_2"/>
    <property type="match status" value="1"/>
</dbReference>